<comment type="function">
    <text evidence="1">Involved in the efflux of sugars. The physiological role may be the reduction of the intracellular concentration of toxic sugars or sugar metabolites.</text>
</comment>
<comment type="subcellular location">
    <subcellularLocation>
        <location evidence="1">Cell inner membrane</location>
        <topology evidence="1">Multi-pass membrane protein</topology>
    </subcellularLocation>
</comment>
<comment type="similarity">
    <text evidence="1">Belongs to the major facilitator superfamily. SotB (TC 2.A.1.2) family.</text>
</comment>
<keyword id="KW-0997">Cell inner membrane</keyword>
<keyword id="KW-1003">Cell membrane</keyword>
<keyword id="KW-0472">Membrane</keyword>
<keyword id="KW-0762">Sugar transport</keyword>
<keyword id="KW-0812">Transmembrane</keyword>
<keyword id="KW-1133">Transmembrane helix</keyword>
<keyword id="KW-0813">Transport</keyword>
<sequence>MTTNTVSRKVAWLRVVTLAIAAFIFNTTEFAPVGLLSDIAGSFGMETAQVGMMLTIYAWVVALMSLPFMLLTSKMERRRLLIGLFILFIASHVLSFFAWSFDVLVISRIGIAFAHAVFWSITSALAIRMAPPGKRAQALSLIATGTALAMVFGIPIGRIIGQYFGWRMTFLAIGLGALATLACLVKLLPTLPSEHSGSLKSLPVLFRRPALVSVYILTVVVVTAHYTAYSYIEPFVQTVAGLSGNFATVLLLILGGAGIIGSILFGKLGNQHASGLISIAIGLLLACLLLLLPASDNAHHLMLLSIFWGVAIMIIGLGMQVKVLASAPDATDVAMSLFSGIFNIGIGAGALVGSQVSLHLSMASIGYIGAIPALAALVWSLMIFRRWPVSLEDHQPHHS</sequence>
<gene>
    <name evidence="1" type="primary">sotB</name>
    <name type="ordered locus">KPK_2756</name>
</gene>
<proteinExistence type="inferred from homology"/>
<organism>
    <name type="scientific">Klebsiella pneumoniae (strain 342)</name>
    <dbReference type="NCBI Taxonomy" id="507522"/>
    <lineage>
        <taxon>Bacteria</taxon>
        <taxon>Pseudomonadati</taxon>
        <taxon>Pseudomonadota</taxon>
        <taxon>Gammaproteobacteria</taxon>
        <taxon>Enterobacterales</taxon>
        <taxon>Enterobacteriaceae</taxon>
        <taxon>Klebsiella/Raoultella group</taxon>
        <taxon>Klebsiella</taxon>
        <taxon>Klebsiella pneumoniae complex</taxon>
    </lineage>
</organism>
<evidence type="ECO:0000255" key="1">
    <source>
        <dbReference type="HAMAP-Rule" id="MF_00517"/>
    </source>
</evidence>
<feature type="chain" id="PRO_1000127466" description="Probable sugar efflux transporter">
    <location>
        <begin position="1"/>
        <end position="399"/>
    </location>
</feature>
<feature type="transmembrane region" description="Helical" evidence="1">
    <location>
        <begin position="15"/>
        <end position="35"/>
    </location>
</feature>
<feature type="transmembrane region" description="Helical" evidence="1">
    <location>
        <begin position="50"/>
        <end position="70"/>
    </location>
</feature>
<feature type="transmembrane region" description="Helical" evidence="1">
    <location>
        <begin position="81"/>
        <end position="101"/>
    </location>
</feature>
<feature type="transmembrane region" description="Helical" evidence="1">
    <location>
        <begin position="103"/>
        <end position="123"/>
    </location>
</feature>
<feature type="transmembrane region" description="Helical" evidence="1">
    <location>
        <begin position="136"/>
        <end position="156"/>
    </location>
</feature>
<feature type="transmembrane region" description="Helical" evidence="1">
    <location>
        <begin position="168"/>
        <end position="188"/>
    </location>
</feature>
<feature type="transmembrane region" description="Helical" evidence="1">
    <location>
        <begin position="209"/>
        <end position="229"/>
    </location>
</feature>
<feature type="transmembrane region" description="Helical" evidence="1">
    <location>
        <begin position="246"/>
        <end position="266"/>
    </location>
</feature>
<feature type="transmembrane region" description="Helical" evidence="1">
    <location>
        <begin position="273"/>
        <end position="293"/>
    </location>
</feature>
<feature type="transmembrane region" description="Helical" evidence="1">
    <location>
        <begin position="301"/>
        <end position="321"/>
    </location>
</feature>
<feature type="transmembrane region" description="Helical" evidence="1">
    <location>
        <begin position="333"/>
        <end position="353"/>
    </location>
</feature>
<feature type="transmembrane region" description="Helical" evidence="1">
    <location>
        <begin position="364"/>
        <end position="384"/>
    </location>
</feature>
<name>SOTB_KLEP3</name>
<protein>
    <recommendedName>
        <fullName evidence="1">Probable sugar efflux transporter</fullName>
    </recommendedName>
</protein>
<reference key="1">
    <citation type="journal article" date="2008" name="PLoS Genet.">
        <title>Complete genome sequence of the N2-fixing broad host range endophyte Klebsiella pneumoniae 342 and virulence predictions verified in mice.</title>
        <authorList>
            <person name="Fouts D.E."/>
            <person name="Tyler H.L."/>
            <person name="DeBoy R.T."/>
            <person name="Daugherty S."/>
            <person name="Ren Q."/>
            <person name="Badger J.H."/>
            <person name="Durkin A.S."/>
            <person name="Huot H."/>
            <person name="Shrivastava S."/>
            <person name="Kothari S."/>
            <person name="Dodson R.J."/>
            <person name="Mohamoud Y."/>
            <person name="Khouri H."/>
            <person name="Roesch L.F.W."/>
            <person name="Krogfelt K.A."/>
            <person name="Struve C."/>
            <person name="Triplett E.W."/>
            <person name="Methe B.A."/>
        </authorList>
    </citation>
    <scope>NUCLEOTIDE SEQUENCE [LARGE SCALE GENOMIC DNA]</scope>
    <source>
        <strain>342</strain>
    </source>
</reference>
<accession>B5XQW2</accession>
<dbReference type="EMBL" id="CP000964">
    <property type="protein sequence ID" value="ACI11809.1"/>
    <property type="molecule type" value="Genomic_DNA"/>
</dbReference>
<dbReference type="SMR" id="B5XQW2"/>
<dbReference type="KEGG" id="kpe:KPK_2756"/>
<dbReference type="HOGENOM" id="CLU_001265_61_2_6"/>
<dbReference type="Proteomes" id="UP000001734">
    <property type="component" value="Chromosome"/>
</dbReference>
<dbReference type="GO" id="GO:0005886">
    <property type="term" value="C:plasma membrane"/>
    <property type="evidence" value="ECO:0007669"/>
    <property type="project" value="UniProtKB-SubCell"/>
</dbReference>
<dbReference type="GO" id="GO:0015144">
    <property type="term" value="F:carbohydrate transmembrane transporter activity"/>
    <property type="evidence" value="ECO:0007669"/>
    <property type="project" value="UniProtKB-UniRule"/>
</dbReference>
<dbReference type="CDD" id="cd17324">
    <property type="entry name" value="MFS_NepI_like"/>
    <property type="match status" value="1"/>
</dbReference>
<dbReference type="Gene3D" id="1.20.1250.20">
    <property type="entry name" value="MFS general substrate transporter like domains"/>
    <property type="match status" value="1"/>
</dbReference>
<dbReference type="HAMAP" id="MF_00517">
    <property type="entry name" value="MFS_SotB"/>
    <property type="match status" value="1"/>
</dbReference>
<dbReference type="InterPro" id="IPR011701">
    <property type="entry name" value="MFS"/>
</dbReference>
<dbReference type="InterPro" id="IPR020846">
    <property type="entry name" value="MFS_dom"/>
</dbReference>
<dbReference type="InterPro" id="IPR050189">
    <property type="entry name" value="MFS_Efflux_Transporters"/>
</dbReference>
<dbReference type="InterPro" id="IPR036259">
    <property type="entry name" value="MFS_trans_sf"/>
</dbReference>
<dbReference type="InterPro" id="IPR023495">
    <property type="entry name" value="Sugar_effux_transptr_put"/>
</dbReference>
<dbReference type="NCBIfam" id="NF002921">
    <property type="entry name" value="PRK03545.1"/>
    <property type="match status" value="1"/>
</dbReference>
<dbReference type="PANTHER" id="PTHR43124">
    <property type="entry name" value="PURINE EFFLUX PUMP PBUE"/>
    <property type="match status" value="1"/>
</dbReference>
<dbReference type="PANTHER" id="PTHR43124:SF4">
    <property type="entry name" value="SUGAR EFFLUX TRANSPORTER"/>
    <property type="match status" value="1"/>
</dbReference>
<dbReference type="Pfam" id="PF07690">
    <property type="entry name" value="MFS_1"/>
    <property type="match status" value="1"/>
</dbReference>
<dbReference type="SUPFAM" id="SSF103473">
    <property type="entry name" value="MFS general substrate transporter"/>
    <property type="match status" value="1"/>
</dbReference>
<dbReference type="PROSITE" id="PS50850">
    <property type="entry name" value="MFS"/>
    <property type="match status" value="1"/>
</dbReference>